<reference key="1">
    <citation type="journal article" date="2001" name="Science">
        <title>Complete genome sequence of a virulent isolate of Streptococcus pneumoniae.</title>
        <authorList>
            <person name="Tettelin H."/>
            <person name="Nelson K.E."/>
            <person name="Paulsen I.T."/>
            <person name="Eisen J.A."/>
            <person name="Read T.D."/>
            <person name="Peterson S.N."/>
            <person name="Heidelberg J.F."/>
            <person name="DeBoy R.T."/>
            <person name="Haft D.H."/>
            <person name="Dodson R.J."/>
            <person name="Durkin A.S."/>
            <person name="Gwinn M.L."/>
            <person name="Kolonay J.F."/>
            <person name="Nelson W.C."/>
            <person name="Peterson J.D."/>
            <person name="Umayam L.A."/>
            <person name="White O."/>
            <person name="Salzberg S.L."/>
            <person name="Lewis M.R."/>
            <person name="Radune D."/>
            <person name="Holtzapple E.K."/>
            <person name="Khouri H.M."/>
            <person name="Wolf A.M."/>
            <person name="Utterback T.R."/>
            <person name="Hansen C.L."/>
            <person name="McDonald L.A."/>
            <person name="Feldblyum T.V."/>
            <person name="Angiuoli S.V."/>
            <person name="Dickinson T."/>
            <person name="Hickey E.K."/>
            <person name="Holt I.E."/>
            <person name="Loftus B.J."/>
            <person name="Yang F."/>
            <person name="Smith H.O."/>
            <person name="Venter J.C."/>
            <person name="Dougherty B.A."/>
            <person name="Morrison D.A."/>
            <person name="Hollingshead S.K."/>
            <person name="Fraser C.M."/>
        </authorList>
    </citation>
    <scope>NUCLEOTIDE SEQUENCE [LARGE SCALE GENOMIC DNA]</scope>
    <source>
        <strain>ATCC BAA-334 / TIGR4</strain>
    </source>
</reference>
<feature type="chain" id="PRO_0000147189" description="tRNA(Met) cytidine acetate ligase">
    <location>
        <begin position="1"/>
        <end position="365"/>
    </location>
</feature>
<feature type="binding site" evidence="1">
    <location>
        <begin position="7"/>
        <end position="20"/>
    </location>
    <ligand>
        <name>ATP</name>
        <dbReference type="ChEBI" id="CHEBI:30616"/>
    </ligand>
</feature>
<feature type="binding site" evidence="1">
    <location>
        <position position="96"/>
    </location>
    <ligand>
        <name>ATP</name>
        <dbReference type="ChEBI" id="CHEBI:30616"/>
    </ligand>
</feature>
<feature type="binding site" evidence="1">
    <location>
        <position position="152"/>
    </location>
    <ligand>
        <name>ATP</name>
        <dbReference type="ChEBI" id="CHEBI:30616"/>
    </ligand>
</feature>
<feature type="binding site" evidence="1">
    <location>
        <position position="175"/>
    </location>
    <ligand>
        <name>ATP</name>
        <dbReference type="ChEBI" id="CHEBI:30616"/>
    </ligand>
</feature>
<comment type="function">
    <text evidence="1">Catalyzes the formation of N(4)-acetylcytidine (ac(4)C) at the wobble position of elongator tRNA(Met), using acetate and ATP as substrates. First activates an acetate ion to form acetyladenylate (Ac-AMP) and then transfers the acetyl group to tRNA to form ac(4)C34.</text>
</comment>
<comment type="catalytic activity">
    <reaction evidence="1">
        <text>cytidine(34) in elongator tRNA(Met) + acetate + ATP = N(4)-acetylcytidine(34) in elongator tRNA(Met) + AMP + diphosphate</text>
        <dbReference type="Rhea" id="RHEA:58144"/>
        <dbReference type="Rhea" id="RHEA-COMP:10693"/>
        <dbReference type="Rhea" id="RHEA-COMP:10694"/>
        <dbReference type="ChEBI" id="CHEBI:30089"/>
        <dbReference type="ChEBI" id="CHEBI:30616"/>
        <dbReference type="ChEBI" id="CHEBI:33019"/>
        <dbReference type="ChEBI" id="CHEBI:74900"/>
        <dbReference type="ChEBI" id="CHEBI:82748"/>
        <dbReference type="ChEBI" id="CHEBI:456215"/>
    </reaction>
</comment>
<comment type="interaction">
    <interactant intactId="EBI-6473888">
        <id>Q97P99</id>
    </interactant>
    <interactant intactId="EBI-6473884">
        <id>Q97R91</id>
        <label>tmk</label>
    </interactant>
    <organismsDiffer>false</organismsDiffer>
    <experiments>3</experiments>
</comment>
<comment type="subcellular location">
    <subcellularLocation>
        <location evidence="1">Cytoplasm</location>
    </subcellularLocation>
</comment>
<comment type="similarity">
    <text evidence="1">Belongs to the TmcAL family.</text>
</comment>
<sequence>MTITGIIAEFNPFHNGHKYLLDQAEGLKIVAMSGNFMQRGEPAIVDKWTRTQMALENGADLVVELPFLVSVQAADFFGQGAMDILDRLGIDSLVFGTEEVRDYQKIADLYTEKGAEMEKFVENLPDSLSYPQKTQAMWKEFAGLDFSGNTPNHVLALAYAKAVAGRNIKLHPIQRQGAGYHSVNKDVDFASATALRQHQKDQDFLERFMPSVALFEQASKVIWEDYFPLLRYQILSNPDLTTIYQVNQEMAVRIKEAIKTAQSVEELVELVTTKRYTKARVRRLLTYILMQARESDLPEAIHVLGFTEKGRQHLKSLKGQVSLVSRIGKEPWDAMTQKADQIYQLGKPSIAEQNFGRVPIRIETN</sequence>
<proteinExistence type="evidence at protein level"/>
<accession>Q97P99</accession>
<keyword id="KW-0067">ATP-binding</keyword>
<keyword id="KW-0963">Cytoplasm</keyword>
<keyword id="KW-0436">Ligase</keyword>
<keyword id="KW-0547">Nucleotide-binding</keyword>
<keyword id="KW-1185">Reference proteome</keyword>
<keyword id="KW-0694">RNA-binding</keyword>
<keyword id="KW-0819">tRNA processing</keyword>
<keyword id="KW-0820">tRNA-binding</keyword>
<organism>
    <name type="scientific">Streptococcus pneumoniae serotype 4 (strain ATCC BAA-334 / TIGR4)</name>
    <dbReference type="NCBI Taxonomy" id="170187"/>
    <lineage>
        <taxon>Bacteria</taxon>
        <taxon>Bacillati</taxon>
        <taxon>Bacillota</taxon>
        <taxon>Bacilli</taxon>
        <taxon>Lactobacillales</taxon>
        <taxon>Streptococcaceae</taxon>
        <taxon>Streptococcus</taxon>
    </lineage>
</organism>
<gene>
    <name evidence="1" type="primary">tmcAL</name>
    <name type="ordered locus">SP_1742</name>
</gene>
<evidence type="ECO:0000255" key="1">
    <source>
        <dbReference type="HAMAP-Rule" id="MF_01539"/>
    </source>
</evidence>
<protein>
    <recommendedName>
        <fullName evidence="1">tRNA(Met) cytidine acetate ligase</fullName>
        <ecNumber evidence="1">6.3.4.-</ecNumber>
    </recommendedName>
</protein>
<name>TMCAL_STRPN</name>
<dbReference type="EC" id="6.3.4.-" evidence="1"/>
<dbReference type="EMBL" id="AE005672">
    <property type="protein sequence ID" value="AAK75818.1"/>
    <property type="molecule type" value="Genomic_DNA"/>
</dbReference>
<dbReference type="PIR" id="A95203">
    <property type="entry name" value="A95203"/>
</dbReference>
<dbReference type="RefSeq" id="WP_000156358.1">
    <property type="nucleotide sequence ID" value="NZ_CP155539.1"/>
</dbReference>
<dbReference type="SMR" id="Q97P99"/>
<dbReference type="IntAct" id="Q97P99">
    <property type="interactions" value="1"/>
</dbReference>
<dbReference type="PaxDb" id="170187-SP_1742"/>
<dbReference type="EnsemblBacteria" id="AAK75818">
    <property type="protein sequence ID" value="AAK75818"/>
    <property type="gene ID" value="SP_1742"/>
</dbReference>
<dbReference type="KEGG" id="spn:SP_1742"/>
<dbReference type="eggNOG" id="COG1323">
    <property type="taxonomic scope" value="Bacteria"/>
</dbReference>
<dbReference type="PhylomeDB" id="Q97P99"/>
<dbReference type="BioCyc" id="SPNE170187:G1FZB-1765-MONOMER"/>
<dbReference type="Proteomes" id="UP000000585">
    <property type="component" value="Chromosome"/>
</dbReference>
<dbReference type="GO" id="GO:0005737">
    <property type="term" value="C:cytoplasm"/>
    <property type="evidence" value="ECO:0007669"/>
    <property type="project" value="UniProtKB-SubCell"/>
</dbReference>
<dbReference type="GO" id="GO:0005524">
    <property type="term" value="F:ATP binding"/>
    <property type="evidence" value="ECO:0007669"/>
    <property type="project" value="UniProtKB-KW"/>
</dbReference>
<dbReference type="GO" id="GO:0016879">
    <property type="term" value="F:ligase activity, forming carbon-nitrogen bonds"/>
    <property type="evidence" value="ECO:0007669"/>
    <property type="project" value="UniProtKB-UniRule"/>
</dbReference>
<dbReference type="GO" id="GO:0000049">
    <property type="term" value="F:tRNA binding"/>
    <property type="evidence" value="ECO:0007669"/>
    <property type="project" value="UniProtKB-KW"/>
</dbReference>
<dbReference type="GO" id="GO:0006400">
    <property type="term" value="P:tRNA modification"/>
    <property type="evidence" value="ECO:0007669"/>
    <property type="project" value="UniProtKB-UniRule"/>
</dbReference>
<dbReference type="Gene3D" id="3.40.50.620">
    <property type="entry name" value="HUPs"/>
    <property type="match status" value="1"/>
</dbReference>
<dbReference type="HAMAP" id="MF_01539">
    <property type="entry name" value="TmcAL"/>
    <property type="match status" value="1"/>
</dbReference>
<dbReference type="InterPro" id="IPR014729">
    <property type="entry name" value="Rossmann-like_a/b/a_fold"/>
</dbReference>
<dbReference type="InterPro" id="IPR008513">
    <property type="entry name" value="tRNA(Met)_cyd_acetate_ligase"/>
</dbReference>
<dbReference type="NCBIfam" id="NF010191">
    <property type="entry name" value="PRK13670.1"/>
    <property type="match status" value="1"/>
</dbReference>
<dbReference type="PANTHER" id="PTHR37825">
    <property type="entry name" value="TRNA(MET) CYTIDINE ACETATE LIGASE"/>
    <property type="match status" value="1"/>
</dbReference>
<dbReference type="PANTHER" id="PTHR37825:SF1">
    <property type="entry name" value="TRNA(MET) CYTIDINE ACETATE LIGASE"/>
    <property type="match status" value="1"/>
</dbReference>
<dbReference type="Pfam" id="PF05636">
    <property type="entry name" value="HIGH_NTase1"/>
    <property type="match status" value="1"/>
</dbReference>
<dbReference type="SUPFAM" id="SSF52374">
    <property type="entry name" value="Nucleotidylyl transferase"/>
    <property type="match status" value="1"/>
</dbReference>